<gene>
    <name evidence="1" type="primary">hemE</name>
    <name type="ordered locus">aq_334</name>
</gene>
<accession>O66667</accession>
<dbReference type="EC" id="4.1.1.37" evidence="1"/>
<dbReference type="EMBL" id="AE000657">
    <property type="protein sequence ID" value="AAC06624.1"/>
    <property type="molecule type" value="Genomic_DNA"/>
</dbReference>
<dbReference type="PIR" id="G70329">
    <property type="entry name" value="G70329"/>
</dbReference>
<dbReference type="RefSeq" id="NP_213227.1">
    <property type="nucleotide sequence ID" value="NC_000918.1"/>
</dbReference>
<dbReference type="RefSeq" id="WP_010880165.1">
    <property type="nucleotide sequence ID" value="NC_000918.1"/>
</dbReference>
<dbReference type="PDB" id="2EJA">
    <property type="method" value="X-ray"/>
    <property type="resolution" value="1.90 A"/>
    <property type="chains" value="A/B=1-338"/>
</dbReference>
<dbReference type="PDBsum" id="2EJA"/>
<dbReference type="SMR" id="O66667"/>
<dbReference type="FunCoup" id="O66667">
    <property type="interactions" value="439"/>
</dbReference>
<dbReference type="STRING" id="224324.aq_334"/>
<dbReference type="EnsemblBacteria" id="AAC06624">
    <property type="protein sequence ID" value="AAC06624"/>
    <property type="gene ID" value="aq_334"/>
</dbReference>
<dbReference type="KEGG" id="aae:aq_334"/>
<dbReference type="PATRIC" id="fig|224324.8.peg.267"/>
<dbReference type="eggNOG" id="COG0407">
    <property type="taxonomic scope" value="Bacteria"/>
</dbReference>
<dbReference type="HOGENOM" id="CLU_040933_0_0_0"/>
<dbReference type="InParanoid" id="O66667"/>
<dbReference type="OrthoDB" id="9806656at2"/>
<dbReference type="UniPathway" id="UPA00251">
    <property type="reaction ID" value="UER00321"/>
</dbReference>
<dbReference type="EvolutionaryTrace" id="O66667"/>
<dbReference type="Proteomes" id="UP000000798">
    <property type="component" value="Chromosome"/>
</dbReference>
<dbReference type="GO" id="GO:0005829">
    <property type="term" value="C:cytosol"/>
    <property type="evidence" value="ECO:0000318"/>
    <property type="project" value="GO_Central"/>
</dbReference>
<dbReference type="GO" id="GO:0004853">
    <property type="term" value="F:uroporphyrinogen decarboxylase activity"/>
    <property type="evidence" value="ECO:0000318"/>
    <property type="project" value="GO_Central"/>
</dbReference>
<dbReference type="GO" id="GO:0006783">
    <property type="term" value="P:heme biosynthetic process"/>
    <property type="evidence" value="ECO:0000318"/>
    <property type="project" value="GO_Central"/>
</dbReference>
<dbReference type="GO" id="GO:0006782">
    <property type="term" value="P:protoporphyrinogen IX biosynthetic process"/>
    <property type="evidence" value="ECO:0007669"/>
    <property type="project" value="UniProtKB-UniRule"/>
</dbReference>
<dbReference type="CDD" id="cd00717">
    <property type="entry name" value="URO-D"/>
    <property type="match status" value="1"/>
</dbReference>
<dbReference type="FunFam" id="3.20.20.210:FF:000007">
    <property type="entry name" value="Uroporphyrinogen decarboxylase"/>
    <property type="match status" value="1"/>
</dbReference>
<dbReference type="Gene3D" id="3.20.20.210">
    <property type="match status" value="1"/>
</dbReference>
<dbReference type="HAMAP" id="MF_00218">
    <property type="entry name" value="URO_D"/>
    <property type="match status" value="1"/>
</dbReference>
<dbReference type="InterPro" id="IPR038071">
    <property type="entry name" value="UROD/MetE-like_sf"/>
</dbReference>
<dbReference type="InterPro" id="IPR006361">
    <property type="entry name" value="Uroporphyrinogen_deCO2ase_HemE"/>
</dbReference>
<dbReference type="InterPro" id="IPR000257">
    <property type="entry name" value="Uroporphyrinogen_deCOase"/>
</dbReference>
<dbReference type="NCBIfam" id="TIGR01464">
    <property type="entry name" value="hemE"/>
    <property type="match status" value="1"/>
</dbReference>
<dbReference type="PANTHER" id="PTHR21091">
    <property type="entry name" value="METHYLTETRAHYDROFOLATE:HOMOCYSTEINE METHYLTRANSFERASE RELATED"/>
    <property type="match status" value="1"/>
</dbReference>
<dbReference type="PANTHER" id="PTHR21091:SF169">
    <property type="entry name" value="UROPORPHYRINOGEN DECARBOXYLASE"/>
    <property type="match status" value="1"/>
</dbReference>
<dbReference type="Pfam" id="PF01208">
    <property type="entry name" value="URO-D"/>
    <property type="match status" value="1"/>
</dbReference>
<dbReference type="SUPFAM" id="SSF51726">
    <property type="entry name" value="UROD/MetE-like"/>
    <property type="match status" value="1"/>
</dbReference>
<dbReference type="PROSITE" id="PS00906">
    <property type="entry name" value="UROD_1"/>
    <property type="match status" value="1"/>
</dbReference>
<dbReference type="PROSITE" id="PS00907">
    <property type="entry name" value="UROD_2"/>
    <property type="match status" value="1"/>
</dbReference>
<sequence length="338" mass="38687">MPKNDLLLRSLRGEPIGRFPVWLMRQAGRYMPEYRKIRNRVKNFLELCKNVDLATEISLLPLKILGVDAIIIFSDILVPLEPLGVKVEFVEGEGPKLSWSGKVSDLKKYDPSQNAYVYEIIKRVKEAQDEVPVIGFAGAPFTLLSYLIEGGASKDFKSTKLFMWENPKEYKRLMDILTETVLAYLKEQIKAGADVVQIFDSWVNNLSLEDYGEYVYPYVNYLISELKDFSDTPVIYFFRGSSSFIDLAVDYRADALSVDWSVDIPELFKIYDKGFQGNLEPAVLYASEEVIEEKTLGLLRRIPVKTRYVFNLGHGLAPDMELEKVKYLVDLVKSFPLT</sequence>
<proteinExistence type="evidence at protein level"/>
<reference key="1">
    <citation type="journal article" date="1998" name="Nature">
        <title>The complete genome of the hyperthermophilic bacterium Aquifex aeolicus.</title>
        <authorList>
            <person name="Deckert G."/>
            <person name="Warren P.V."/>
            <person name="Gaasterland T."/>
            <person name="Young W.G."/>
            <person name="Lenox A.L."/>
            <person name="Graham D.E."/>
            <person name="Overbeek R."/>
            <person name="Snead M.A."/>
            <person name="Keller M."/>
            <person name="Aujay M."/>
            <person name="Huber R."/>
            <person name="Feldman R.A."/>
            <person name="Short J.M."/>
            <person name="Olsen G.J."/>
            <person name="Swanson R.V."/>
        </authorList>
    </citation>
    <scope>NUCLEOTIDE SEQUENCE [LARGE SCALE GENOMIC DNA]</scope>
    <source>
        <strain>VF5</strain>
    </source>
</reference>
<keyword id="KW-0002">3D-structure</keyword>
<keyword id="KW-0963">Cytoplasm</keyword>
<keyword id="KW-0210">Decarboxylase</keyword>
<keyword id="KW-0456">Lyase</keyword>
<keyword id="KW-0627">Porphyrin biosynthesis</keyword>
<keyword id="KW-1185">Reference proteome</keyword>
<name>DCUP_AQUAE</name>
<evidence type="ECO:0000255" key="1">
    <source>
        <dbReference type="HAMAP-Rule" id="MF_00218"/>
    </source>
</evidence>
<evidence type="ECO:0007829" key="2">
    <source>
        <dbReference type="PDB" id="2EJA"/>
    </source>
</evidence>
<organism>
    <name type="scientific">Aquifex aeolicus (strain VF5)</name>
    <dbReference type="NCBI Taxonomy" id="224324"/>
    <lineage>
        <taxon>Bacteria</taxon>
        <taxon>Pseudomonadati</taxon>
        <taxon>Aquificota</taxon>
        <taxon>Aquificia</taxon>
        <taxon>Aquificales</taxon>
        <taxon>Aquificaceae</taxon>
        <taxon>Aquifex</taxon>
    </lineage>
</organism>
<feature type="chain" id="PRO_0000187580" description="Uroporphyrinogen decarboxylase">
    <location>
        <begin position="1"/>
        <end position="338"/>
    </location>
</feature>
<feature type="binding site" evidence="1">
    <location>
        <begin position="25"/>
        <end position="29"/>
    </location>
    <ligand>
        <name>substrate</name>
    </ligand>
</feature>
<feature type="binding site" evidence="1">
    <location>
        <position position="44"/>
    </location>
    <ligand>
        <name>substrate</name>
    </ligand>
</feature>
<feature type="binding site" evidence="1">
    <location>
        <position position="75"/>
    </location>
    <ligand>
        <name>substrate</name>
    </ligand>
</feature>
<feature type="binding site" evidence="1">
    <location>
        <position position="146"/>
    </location>
    <ligand>
        <name>substrate</name>
    </ligand>
</feature>
<feature type="binding site" evidence="1">
    <location>
        <position position="201"/>
    </location>
    <ligand>
        <name>substrate</name>
    </ligand>
</feature>
<feature type="binding site" evidence="1">
    <location>
        <position position="314"/>
    </location>
    <ligand>
        <name>substrate</name>
    </ligand>
</feature>
<feature type="site" description="Transition state stabilizer" evidence="1">
    <location>
        <position position="75"/>
    </location>
</feature>
<feature type="helix" evidence="2">
    <location>
        <begin position="6"/>
        <end position="11"/>
    </location>
</feature>
<feature type="helix" evidence="2">
    <location>
        <begin position="32"/>
        <end position="38"/>
    </location>
</feature>
<feature type="strand" evidence="2">
    <location>
        <begin position="41"/>
        <end position="43"/>
    </location>
</feature>
<feature type="helix" evidence="2">
    <location>
        <begin position="44"/>
        <end position="49"/>
    </location>
</feature>
<feature type="helix" evidence="2">
    <location>
        <begin position="51"/>
        <end position="65"/>
    </location>
</feature>
<feature type="helix" evidence="2">
    <location>
        <begin position="78"/>
        <end position="83"/>
    </location>
</feature>
<feature type="strand" evidence="2">
    <location>
        <begin position="86"/>
        <end position="90"/>
    </location>
</feature>
<feature type="turn" evidence="2">
    <location>
        <begin position="91"/>
        <end position="93"/>
    </location>
</feature>
<feature type="strand" evidence="2">
    <location>
        <begin position="94"/>
        <end position="98"/>
    </location>
</feature>
<feature type="helix" evidence="2">
    <location>
        <begin position="103"/>
        <end position="105"/>
    </location>
</feature>
<feature type="helix" evidence="2">
    <location>
        <begin position="111"/>
        <end position="114"/>
    </location>
</feature>
<feature type="helix" evidence="2">
    <location>
        <begin position="115"/>
        <end position="127"/>
    </location>
</feature>
<feature type="strand" evidence="2">
    <location>
        <begin position="133"/>
        <end position="138"/>
    </location>
</feature>
<feature type="helix" evidence="2">
    <location>
        <begin position="140"/>
        <end position="149"/>
    </location>
</feature>
<feature type="helix" evidence="2">
    <location>
        <begin position="157"/>
        <end position="165"/>
    </location>
</feature>
<feature type="helix" evidence="2">
    <location>
        <begin position="167"/>
        <end position="190"/>
    </location>
</feature>
<feature type="strand" evidence="2">
    <location>
        <begin position="194"/>
        <end position="200"/>
    </location>
</feature>
<feature type="helix" evidence="2">
    <location>
        <begin position="203"/>
        <end position="205"/>
    </location>
</feature>
<feature type="helix" evidence="2">
    <location>
        <begin position="208"/>
        <end position="214"/>
    </location>
</feature>
<feature type="helix" evidence="2">
    <location>
        <begin position="216"/>
        <end position="229"/>
    </location>
</feature>
<feature type="strand" evidence="2">
    <location>
        <begin position="234"/>
        <end position="240"/>
    </location>
</feature>
<feature type="helix" evidence="2">
    <location>
        <begin position="241"/>
        <end position="248"/>
    </location>
</feature>
<feature type="strand" evidence="2">
    <location>
        <begin position="254"/>
        <end position="257"/>
    </location>
</feature>
<feature type="helix" evidence="2">
    <location>
        <begin position="264"/>
        <end position="270"/>
    </location>
</feature>
<feature type="strand" evidence="2">
    <location>
        <begin position="273"/>
        <end position="276"/>
    </location>
</feature>
<feature type="helix" evidence="2">
    <location>
        <begin position="281"/>
        <end position="285"/>
    </location>
</feature>
<feature type="helix" evidence="2">
    <location>
        <begin position="288"/>
        <end position="299"/>
    </location>
</feature>
<feature type="strand" evidence="2">
    <location>
        <begin position="305"/>
        <end position="310"/>
    </location>
</feature>
<feature type="strand" evidence="2">
    <location>
        <begin position="312"/>
        <end position="314"/>
    </location>
</feature>
<feature type="helix" evidence="2">
    <location>
        <begin position="322"/>
        <end position="333"/>
    </location>
</feature>
<protein>
    <recommendedName>
        <fullName evidence="1">Uroporphyrinogen decarboxylase</fullName>
        <shortName evidence="1">UPD</shortName>
        <shortName evidence="1">URO-D</shortName>
        <ecNumber evidence="1">4.1.1.37</ecNumber>
    </recommendedName>
</protein>
<comment type="function">
    <text evidence="1">Catalyzes the decarboxylation of four acetate groups of uroporphyrinogen-III to yield coproporphyrinogen-III.</text>
</comment>
<comment type="catalytic activity">
    <reaction evidence="1">
        <text>uroporphyrinogen III + 4 H(+) = coproporphyrinogen III + 4 CO2</text>
        <dbReference type="Rhea" id="RHEA:19865"/>
        <dbReference type="ChEBI" id="CHEBI:15378"/>
        <dbReference type="ChEBI" id="CHEBI:16526"/>
        <dbReference type="ChEBI" id="CHEBI:57308"/>
        <dbReference type="ChEBI" id="CHEBI:57309"/>
        <dbReference type="EC" id="4.1.1.37"/>
    </reaction>
</comment>
<comment type="pathway">
    <text evidence="1">Porphyrin-containing compound metabolism; protoporphyrin-IX biosynthesis; coproporphyrinogen-III from 5-aminolevulinate: step 4/4.</text>
</comment>
<comment type="subunit">
    <text evidence="1">Homodimer.</text>
</comment>
<comment type="subcellular location">
    <subcellularLocation>
        <location evidence="1">Cytoplasm</location>
    </subcellularLocation>
</comment>
<comment type="similarity">
    <text evidence="1">Belongs to the uroporphyrinogen decarboxylase family.</text>
</comment>